<proteinExistence type="predicted"/>
<sequence>MKKYDRGWASLETGAALLIVMLLIAWGAGIWQDYIQTKGWQTEARLVSNWTSAARSYIGKNYTTLQGSSTTTTPAVITTTMLKNTGFLSSGFTETNSEGQRLQAYVVRNAQNPELLQAMVVSSGGTPYPVKALIQMAKDITTGLGGYIQDGKTATGALRSWSVALSNYGAKSGNGHIAVLLSTDELSGAAEDTDRLYRFQVNGRPDLNKMHTAIDMGSNNLNNVGAVNAQTGNFSGNVNGVNGTFSGQVKGNSGNFDVNVTAGGDIRSNNGWLITRNSKGWLNETHGGGFYMSDGSWVRSVNNKGIYTGGQVKGGTVRADGRLYTGEYLQLERTAVAGASCSPNGLVGRDNTGAILSCQSGTWKTSGSLNGSYTNLGSHRGSFSGRNSGGSTLFIYASGGNGGSAGGACANTSRLQGYVGGTLISVNASNNPAYGKTAFISFAVPAGTSYQITSYPTENTSCGAGVFSVFGYQT</sequence>
<comment type="miscellaneous">
    <text>This protein is expressed by a shufflon (= clustered inversion region that works as a biological switch). The orfs of this region share a constant N-terminus, while the C-terminus is variable.</text>
</comment>
<accession>P09745</accession>
<accession>Q9R2H7</accession>
<name>SHU1_ECOLX</name>
<reference key="1">
    <citation type="journal article" date="1987" name="Nucleic Acids Res.">
        <title>Shufflon: multi-inversion of four contiguous DNA segments of plasmid R64 creates seven different open reading frames.</title>
        <authorList>
            <person name="Komano T."/>
            <person name="Kubo A."/>
            <person name="Nisioka T."/>
        </authorList>
    </citation>
    <scope>NUCLEOTIDE SEQUENCE [GENOMIC DNA]</scope>
</reference>
<feature type="chain" id="PRO_0000097741" description="Shufflon protein A">
    <location>
        <begin position="1"/>
        <end position="474"/>
    </location>
</feature>
<feature type="region of interest" description="Constant region">
    <location>
        <begin position="1"/>
        <end position="361"/>
    </location>
</feature>
<feature type="region of interest" description="Variable region">
    <location>
        <begin position="362"/>
        <end position="474"/>
    </location>
</feature>
<keyword id="KW-0614">Plasmid</keyword>
<protein>
    <recommendedName>
        <fullName>Shufflon protein A</fullName>
    </recommendedName>
</protein>
<geneLocation type="plasmid">
    <name>IncI1 R64</name>
</geneLocation>
<dbReference type="EMBL" id="AB027308">
    <property type="protein sequence ID" value="BAA77982.1"/>
    <property type="molecule type" value="Genomic_DNA"/>
</dbReference>
<dbReference type="EMBL" id="AB027308">
    <property type="protein sequence ID" value="BAA77983.1"/>
    <property type="molecule type" value="Genomic_DNA"/>
</dbReference>
<dbReference type="PIR" id="A26421">
    <property type="entry name" value="A26421"/>
</dbReference>
<dbReference type="RefSeq" id="WP_001389385.1">
    <property type="nucleotide sequence ID" value="NZ_WVVK01000025.1"/>
</dbReference>
<dbReference type="RefSeq" id="YP_003108169.1">
    <property type="nucleotide sequence ID" value="NC_013120.1"/>
</dbReference>
<dbReference type="RefSeq" id="YP_008998818.1">
    <property type="nucleotide sequence ID" value="NC_023329.1"/>
</dbReference>
<dbReference type="RefSeq" id="YP_009061391.1">
    <property type="nucleotide sequence ID" value="NC_024977.1"/>
</dbReference>
<dbReference type="RefSeq" id="YP_009069682.1">
    <property type="nucleotide sequence ID" value="NC_025147.1"/>
</dbReference>
<dbReference type="InterPro" id="IPR029017">
    <property type="entry name" value="Enolase-like_N"/>
</dbReference>
<dbReference type="InterPro" id="IPR007001">
    <property type="entry name" value="Shufflon_N"/>
</dbReference>
<dbReference type="Pfam" id="PF04917">
    <property type="entry name" value="Shufflon_N"/>
    <property type="match status" value="1"/>
</dbReference>
<dbReference type="SUPFAM" id="SSF54826">
    <property type="entry name" value="Enolase N-terminal domain-like"/>
    <property type="match status" value="1"/>
</dbReference>
<organism>
    <name type="scientific">Escherichia coli</name>
    <dbReference type="NCBI Taxonomy" id="562"/>
    <lineage>
        <taxon>Bacteria</taxon>
        <taxon>Pseudomonadati</taxon>
        <taxon>Pseudomonadota</taxon>
        <taxon>Gammaproteobacteria</taxon>
        <taxon>Enterobacterales</taxon>
        <taxon>Enterobacteriaceae</taxon>
        <taxon>Escherichia</taxon>
    </lineage>
</organism>